<comment type="subcellular location">
    <subcellularLocation>
        <location evidence="2">Host membrane</location>
        <topology evidence="2">Single-pass membrane protein</topology>
    </subcellularLocation>
</comment>
<comment type="similarity">
    <text evidence="2">Belongs to the HHV-5 US34A protein family.</text>
</comment>
<organism>
    <name type="scientific">Human cytomegalovirus (strain AD169)</name>
    <name type="common">HHV-5</name>
    <name type="synonym">Human herpesvirus 5</name>
    <dbReference type="NCBI Taxonomy" id="10360"/>
    <lineage>
        <taxon>Viruses</taxon>
        <taxon>Duplodnaviria</taxon>
        <taxon>Heunggongvirae</taxon>
        <taxon>Peploviricota</taxon>
        <taxon>Herviviricetes</taxon>
        <taxon>Herpesvirales</taxon>
        <taxon>Orthoherpesviridae</taxon>
        <taxon>Betaherpesvirinae</taxon>
        <taxon>Cytomegalovirus</taxon>
        <taxon>Cytomegalovirus humanbeta5</taxon>
        <taxon>Human cytomegalovirus</taxon>
    </lineage>
</organism>
<organismHost>
    <name type="scientific">Homo sapiens</name>
    <name type="common">Human</name>
    <dbReference type="NCBI Taxonomy" id="9606"/>
</organismHost>
<proteinExistence type="inferred from homology"/>
<sequence length="64" mass="8113">MLKFLLKFRKRRRPVVVPRFVRFIVYVVLFTVAVQRVKQERDAHLRRYEERLRKNRARRRQSFP</sequence>
<evidence type="ECO:0000255" key="1"/>
<evidence type="ECO:0000305" key="2"/>
<name>US34A_HCMVA</name>
<keyword id="KW-1043">Host membrane</keyword>
<keyword id="KW-0472">Membrane</keyword>
<keyword id="KW-1185">Reference proteome</keyword>
<keyword id="KW-0812">Transmembrane</keyword>
<keyword id="KW-1133">Transmembrane helix</keyword>
<dbReference type="EMBL" id="X17403">
    <property type="status" value="NOT_ANNOTATED_CDS"/>
    <property type="molecule type" value="Genomic_DNA"/>
</dbReference>
<dbReference type="EMBL" id="BK000394">
    <property type="protein sequence ID" value="DAA00222.1"/>
    <property type="molecule type" value="Genomic_DNA"/>
</dbReference>
<dbReference type="SMR" id="Q7M6G6"/>
<dbReference type="Proteomes" id="UP000008991">
    <property type="component" value="Segment"/>
</dbReference>
<dbReference type="Proteomes" id="UP000008992">
    <property type="component" value="Segment"/>
</dbReference>
<dbReference type="GO" id="GO:0033644">
    <property type="term" value="C:host cell membrane"/>
    <property type="evidence" value="ECO:0007669"/>
    <property type="project" value="UniProtKB-SubCell"/>
</dbReference>
<dbReference type="GO" id="GO:0016020">
    <property type="term" value="C:membrane"/>
    <property type="evidence" value="ECO:0007669"/>
    <property type="project" value="UniProtKB-KW"/>
</dbReference>
<dbReference type="InterPro" id="IPR031384">
    <property type="entry name" value="HHV-5_US34A"/>
</dbReference>
<dbReference type="Pfam" id="PF17087">
    <property type="entry name" value="HHV-5_US34A"/>
    <property type="match status" value="1"/>
</dbReference>
<accession>Q7M6G6</accession>
<protein>
    <recommendedName>
        <fullName>Uncharacterized protein US34A</fullName>
    </recommendedName>
</protein>
<gene>
    <name type="primary">US34A</name>
</gene>
<feature type="chain" id="PRO_0000115295" description="Uncharacterized protein US34A">
    <location>
        <begin position="1"/>
        <end position="64"/>
    </location>
</feature>
<feature type="transmembrane region" description="Helical" evidence="1">
    <location>
        <begin position="15"/>
        <end position="37"/>
    </location>
</feature>
<reference key="1">
    <citation type="journal article" date="1990" name="Curr. Top. Microbiol. Immunol.">
        <title>Analysis of the protein-coding content of the sequence of human cytomegalovirus strain AD169.</title>
        <authorList>
            <person name="Chee M.S."/>
            <person name="Bankier A.T."/>
            <person name="Beck S."/>
            <person name="Bohni R."/>
            <person name="Brown C.M."/>
            <person name="Cerny R."/>
            <person name="Horsnell T."/>
            <person name="Hutchison C.A. III"/>
            <person name="Kouzarides T."/>
            <person name="Martignetti J.A."/>
            <person name="Preddie E."/>
            <person name="Satchwell S.C."/>
            <person name="Tomlinson P."/>
            <person name="Weston K.M."/>
            <person name="Barrell B.G."/>
        </authorList>
    </citation>
    <scope>NUCLEOTIDE SEQUENCE [LARGE SCALE GENOMIC DNA]</scope>
</reference>
<reference key="2">
    <citation type="journal article" date="2003" name="J. Gen. Virol.">
        <title>The human cytomegalovirus genome revisited: comparison with the chimpanzee cytomegalovirus genome.</title>
        <authorList>
            <person name="Davison A.J."/>
            <person name="Dolan A."/>
            <person name="Akter P."/>
            <person name="Addison C."/>
            <person name="Dargan D.J."/>
            <person name="Alcendor D.J."/>
            <person name="McGeoch D.J."/>
            <person name="Hayward G.S."/>
        </authorList>
    </citation>
    <scope>GENOME REANNOTATION</scope>
</reference>
<reference key="3">
    <citation type="journal article" date="2003" name="J. Gen. Virol.">
        <authorList>
            <person name="Davison A.J."/>
            <person name="Dolan A."/>
            <person name="Akter P."/>
            <person name="Addison C."/>
            <person name="Dargan D.J."/>
            <person name="Alcendor D.J."/>
            <person name="McGeoch D.J."/>
            <person name="Hayward G.S."/>
        </authorList>
    </citation>
    <scope>ERRATUM OF PUBMED:12533697</scope>
</reference>